<dbReference type="EMBL" id="AE016826">
    <property type="protein sequence ID" value="AAO26763.1"/>
    <property type="molecule type" value="Genomic_DNA"/>
</dbReference>
<dbReference type="RefSeq" id="WP_011091164.1">
    <property type="nucleotide sequence ID" value="NC_004545.1"/>
</dbReference>
<dbReference type="SMR" id="P59525"/>
<dbReference type="STRING" id="224915.bbp_020"/>
<dbReference type="KEGG" id="bab:bbp_020"/>
<dbReference type="eggNOG" id="COG0234">
    <property type="taxonomic scope" value="Bacteria"/>
</dbReference>
<dbReference type="HOGENOM" id="CLU_132825_1_1_6"/>
<dbReference type="OrthoDB" id="9806791at2"/>
<dbReference type="Proteomes" id="UP000000601">
    <property type="component" value="Chromosome"/>
</dbReference>
<dbReference type="GO" id="GO:0005737">
    <property type="term" value="C:cytoplasm"/>
    <property type="evidence" value="ECO:0007669"/>
    <property type="project" value="UniProtKB-SubCell"/>
</dbReference>
<dbReference type="GO" id="GO:0005524">
    <property type="term" value="F:ATP binding"/>
    <property type="evidence" value="ECO:0007669"/>
    <property type="project" value="InterPro"/>
</dbReference>
<dbReference type="GO" id="GO:0046872">
    <property type="term" value="F:metal ion binding"/>
    <property type="evidence" value="ECO:0007669"/>
    <property type="project" value="TreeGrafter"/>
</dbReference>
<dbReference type="GO" id="GO:0044183">
    <property type="term" value="F:protein folding chaperone"/>
    <property type="evidence" value="ECO:0007669"/>
    <property type="project" value="InterPro"/>
</dbReference>
<dbReference type="GO" id="GO:0051087">
    <property type="term" value="F:protein-folding chaperone binding"/>
    <property type="evidence" value="ECO:0007669"/>
    <property type="project" value="TreeGrafter"/>
</dbReference>
<dbReference type="GO" id="GO:0051082">
    <property type="term" value="F:unfolded protein binding"/>
    <property type="evidence" value="ECO:0007669"/>
    <property type="project" value="TreeGrafter"/>
</dbReference>
<dbReference type="GO" id="GO:0051085">
    <property type="term" value="P:chaperone cofactor-dependent protein refolding"/>
    <property type="evidence" value="ECO:0007669"/>
    <property type="project" value="TreeGrafter"/>
</dbReference>
<dbReference type="CDD" id="cd00320">
    <property type="entry name" value="cpn10"/>
    <property type="match status" value="1"/>
</dbReference>
<dbReference type="FunFam" id="2.30.33.40:FF:000001">
    <property type="entry name" value="10 kDa chaperonin"/>
    <property type="match status" value="1"/>
</dbReference>
<dbReference type="Gene3D" id="2.30.33.40">
    <property type="entry name" value="GroES chaperonin"/>
    <property type="match status" value="1"/>
</dbReference>
<dbReference type="HAMAP" id="MF_00580">
    <property type="entry name" value="CH10"/>
    <property type="match status" value="1"/>
</dbReference>
<dbReference type="InterPro" id="IPR020818">
    <property type="entry name" value="Chaperonin_GroES"/>
</dbReference>
<dbReference type="InterPro" id="IPR037124">
    <property type="entry name" value="Chaperonin_GroES_sf"/>
</dbReference>
<dbReference type="InterPro" id="IPR018369">
    <property type="entry name" value="Chaprnonin_Cpn10_CS"/>
</dbReference>
<dbReference type="InterPro" id="IPR011032">
    <property type="entry name" value="GroES-like_sf"/>
</dbReference>
<dbReference type="NCBIfam" id="NF001526">
    <property type="entry name" value="PRK00364.1-1"/>
    <property type="match status" value="1"/>
</dbReference>
<dbReference type="NCBIfam" id="NF001527">
    <property type="entry name" value="PRK00364.1-2"/>
    <property type="match status" value="1"/>
</dbReference>
<dbReference type="NCBIfam" id="NF001531">
    <property type="entry name" value="PRK00364.2-2"/>
    <property type="match status" value="1"/>
</dbReference>
<dbReference type="PANTHER" id="PTHR10772">
    <property type="entry name" value="10 KDA HEAT SHOCK PROTEIN"/>
    <property type="match status" value="1"/>
</dbReference>
<dbReference type="PANTHER" id="PTHR10772:SF58">
    <property type="entry name" value="CO-CHAPERONIN GROES"/>
    <property type="match status" value="1"/>
</dbReference>
<dbReference type="Pfam" id="PF00166">
    <property type="entry name" value="Cpn10"/>
    <property type="match status" value="1"/>
</dbReference>
<dbReference type="PRINTS" id="PR00297">
    <property type="entry name" value="CHAPERONIN10"/>
</dbReference>
<dbReference type="SMART" id="SM00883">
    <property type="entry name" value="Cpn10"/>
    <property type="match status" value="1"/>
</dbReference>
<dbReference type="SUPFAM" id="SSF50129">
    <property type="entry name" value="GroES-like"/>
    <property type="match status" value="1"/>
</dbReference>
<dbReference type="PROSITE" id="PS00681">
    <property type="entry name" value="CHAPERONINS_CPN10"/>
    <property type="match status" value="1"/>
</dbReference>
<keyword id="KW-0143">Chaperone</keyword>
<keyword id="KW-0963">Cytoplasm</keyword>
<keyword id="KW-1185">Reference proteome</keyword>
<accession>P59525</accession>
<protein>
    <recommendedName>
        <fullName evidence="1">Co-chaperonin GroES</fullName>
    </recommendedName>
    <alternativeName>
        <fullName evidence="1">10 kDa chaperonin</fullName>
    </alternativeName>
    <alternativeName>
        <fullName evidence="1">Chaperonin-10</fullName>
        <shortName evidence="1">Cpn10</shortName>
    </alternativeName>
</protein>
<organism>
    <name type="scientific">Buchnera aphidicola subsp. Baizongia pistaciae (strain Bp)</name>
    <dbReference type="NCBI Taxonomy" id="224915"/>
    <lineage>
        <taxon>Bacteria</taxon>
        <taxon>Pseudomonadati</taxon>
        <taxon>Pseudomonadota</taxon>
        <taxon>Gammaproteobacteria</taxon>
        <taxon>Enterobacterales</taxon>
        <taxon>Erwiniaceae</taxon>
        <taxon>Buchnera</taxon>
    </lineage>
</organism>
<proteinExistence type="inferred from homology"/>
<comment type="function">
    <text evidence="1">Together with the chaperonin GroEL, plays an essential role in assisting protein folding. The GroEL-GroES system forms a nano-cage that allows encapsulation of the non-native substrate proteins and provides a physical environment optimized to promote and accelerate protein folding. GroES binds to the apical surface of the GroEL ring, thereby capping the opening of the GroEL channel.</text>
</comment>
<comment type="subunit">
    <text evidence="1">Heptamer of 7 subunits arranged in a ring. Interacts with the chaperonin GroEL.</text>
</comment>
<comment type="subcellular location">
    <subcellularLocation>
        <location evidence="1">Cytoplasm</location>
    </subcellularLocation>
</comment>
<comment type="similarity">
    <text evidence="1">Belongs to the GroES chaperonin family.</text>
</comment>
<reference key="1">
    <citation type="journal article" date="2003" name="Proc. Natl. Acad. Sci. U.S.A.">
        <title>Reductive genome evolution in Buchnera aphidicola.</title>
        <authorList>
            <person name="van Ham R.C.H.J."/>
            <person name="Kamerbeek J."/>
            <person name="Palacios C."/>
            <person name="Rausell C."/>
            <person name="Abascal F."/>
            <person name="Bastolla U."/>
            <person name="Fernandez J.M."/>
            <person name="Jimenez L."/>
            <person name="Postigo M."/>
            <person name="Silva F.J."/>
            <person name="Tamames J."/>
            <person name="Viguera E."/>
            <person name="Latorre A."/>
            <person name="Valencia A."/>
            <person name="Moran F."/>
            <person name="Moya A."/>
        </authorList>
    </citation>
    <scope>NUCLEOTIDE SEQUENCE [LARGE SCALE GENOMIC DNA]</scope>
    <source>
        <strain>Bp</strain>
    </source>
</reference>
<evidence type="ECO:0000255" key="1">
    <source>
        <dbReference type="HAMAP-Rule" id="MF_00580"/>
    </source>
</evidence>
<feature type="chain" id="PRO_0000174714" description="Co-chaperonin GroES">
    <location>
        <begin position="1"/>
        <end position="97"/>
    </location>
</feature>
<gene>
    <name evidence="1" type="primary">groES</name>
    <name evidence="1" type="synonym">groS</name>
    <name type="synonym">mopB</name>
    <name type="ordered locus">bbp_020</name>
</gene>
<name>CH10_BUCBP</name>
<sequence>MKIRPLHDRVIVKRKEAESKSAGGIVLTGSAAGKSTRGTVIAVGNGRILDNGNLKSLDVKVGDTVIFNEGYGAKVEKIDNEELLILTESDILAIVEE</sequence>